<reference key="1">
    <citation type="journal article" date="1996" name="EMBO J.">
        <title>Sac1, a putative regulator that is critical for survival of Chlamydomonas reinhardtii during sulfur deprivation.</title>
        <authorList>
            <person name="Davies J.P."/>
            <person name="Yildiz F.H."/>
            <person name="Grossman A."/>
        </authorList>
    </citation>
    <scope>NUCLEOTIDE SEQUENCE [MRNA]</scope>
    <source>
        <strain>137c / CC-125</strain>
    </source>
</reference>
<feature type="chain" id="PRO_0000172508" description="Putative sulfur deprivation response regulator">
    <location>
        <begin position="1"/>
        <end position="585"/>
    </location>
</feature>
<feature type="transmembrane region" description="Helical" evidence="1">
    <location>
        <begin position="5"/>
        <end position="25"/>
    </location>
</feature>
<feature type="transmembrane region" description="Helical" evidence="1">
    <location>
        <begin position="30"/>
        <end position="50"/>
    </location>
</feature>
<feature type="transmembrane region" description="Helical" evidence="1">
    <location>
        <begin position="83"/>
        <end position="103"/>
    </location>
</feature>
<feature type="transmembrane region" description="Helical" evidence="1">
    <location>
        <begin position="117"/>
        <end position="137"/>
    </location>
</feature>
<feature type="transmembrane region" description="Helical" evidence="1">
    <location>
        <begin position="162"/>
        <end position="182"/>
    </location>
</feature>
<feature type="transmembrane region" description="Helical" evidence="1">
    <location>
        <begin position="389"/>
        <end position="409"/>
    </location>
</feature>
<feature type="transmembrane region" description="Helical" evidence="1">
    <location>
        <begin position="411"/>
        <end position="431"/>
    </location>
</feature>
<feature type="transmembrane region" description="Helical" evidence="1">
    <location>
        <begin position="442"/>
        <end position="462"/>
    </location>
</feature>
<feature type="transmembrane region" description="Helical" evidence="1">
    <location>
        <begin position="482"/>
        <end position="502"/>
    </location>
</feature>
<feature type="transmembrane region" description="Helical" evidence="1">
    <location>
        <begin position="561"/>
        <end position="581"/>
    </location>
</feature>
<feature type="domain" description="RCK C-terminal 1" evidence="2">
    <location>
        <begin position="189"/>
        <end position="274"/>
    </location>
</feature>
<feature type="domain" description="RCK C-terminal 2" evidence="2">
    <location>
        <begin position="288"/>
        <end position="372"/>
    </location>
</feature>
<sequence>MIRGVVDADVCLFAASTLLLLRGIIQARDAFAGLANDSIVSIALMMMIAAGLESSGALEFVPELVLGRSKREWVGQLRMHIAVASVSAVMNNTPLVAVMIPVVESWCRNNNHHPSRFMMPLSYSAILGGLCTIIGTSTNLIARGLAQQDDPKLKLPFVEVGIIGLPLTVAGGIYVVLFSPLLLRKRDTMMAAVVADPREYVVSVRVDARFAHIGRTIESAGLRHLRGLFLADLQRQDGATVPSPPPTTIILQGDKLTFAGDIQGMQHILSLPGLTPISSADLAADLEETVAGSPSSDRIMVEAVVSLSSPICNMTIRDSHFRSRYGAVVLRVHRNGERIAGGLGDIVVKGGDTMLLEAGPDFLQKYKHSTEWALAVDAFRVTLPRRDPLALFMSLGIFIALIVLNSMDVLPLSTTALVCLFAYLITGVLTVSQCRAAIPSSILLTVAGGFGVAKAMTVTGLAHRLAGSLLNVFSWMGRAGPVAAIYASTSLLTALLSNGAAVTLMYPIARDLAKQAGVSIKGPLYALMIGASSDFSTPIGYQTNLMVSGPGGYRFLDFTRFGLPLQFVAALITVPICVLYFEPRT</sequence>
<proteinExistence type="evidence at transcript level"/>
<name>SAC1_CHLRE</name>
<gene>
    <name type="primary">SAC1</name>
</gene>
<protein>
    <recommendedName>
        <fullName>Putative sulfur deprivation response regulator</fullName>
    </recommendedName>
</protein>
<organism>
    <name type="scientific">Chlamydomonas reinhardtii</name>
    <name type="common">Chlamydomonas smithii</name>
    <dbReference type="NCBI Taxonomy" id="3055"/>
    <lineage>
        <taxon>Eukaryota</taxon>
        <taxon>Viridiplantae</taxon>
        <taxon>Chlorophyta</taxon>
        <taxon>core chlorophytes</taxon>
        <taxon>Chlorophyceae</taxon>
        <taxon>CS clade</taxon>
        <taxon>Chlamydomonadales</taxon>
        <taxon>Chlamydomonadaceae</taxon>
        <taxon>Chlamydomonas</taxon>
    </lineage>
</organism>
<accession>Q39593</accession>
<dbReference type="EMBL" id="U47541">
    <property type="protein sequence ID" value="AAB08008.1"/>
    <property type="molecule type" value="mRNA"/>
</dbReference>
<dbReference type="PIR" id="S69216">
    <property type="entry name" value="S69216"/>
</dbReference>
<dbReference type="PaxDb" id="3055-EDP00156"/>
<dbReference type="eggNOG" id="ENOG502QPZM">
    <property type="taxonomic scope" value="Eukaryota"/>
</dbReference>
<dbReference type="GO" id="GO:0016020">
    <property type="term" value="C:membrane"/>
    <property type="evidence" value="ECO:0007669"/>
    <property type="project" value="UniProtKB-SubCell"/>
</dbReference>
<dbReference type="GO" id="GO:0008324">
    <property type="term" value="F:monoatomic cation transmembrane transporter activity"/>
    <property type="evidence" value="ECO:0007669"/>
    <property type="project" value="InterPro"/>
</dbReference>
<dbReference type="GO" id="GO:0006813">
    <property type="term" value="P:potassium ion transport"/>
    <property type="evidence" value="ECO:0007669"/>
    <property type="project" value="InterPro"/>
</dbReference>
<dbReference type="Gene3D" id="3.30.70.1450">
    <property type="entry name" value="Regulator of K+ conductance, C-terminal domain"/>
    <property type="match status" value="2"/>
</dbReference>
<dbReference type="InterPro" id="IPR004680">
    <property type="entry name" value="Cit_transptr-like_dom"/>
</dbReference>
<dbReference type="InterPro" id="IPR051679">
    <property type="entry name" value="DASS-Related_Transporters"/>
</dbReference>
<dbReference type="InterPro" id="IPR031312">
    <property type="entry name" value="Na/sul_symport_CS"/>
</dbReference>
<dbReference type="InterPro" id="IPR006037">
    <property type="entry name" value="RCK_C"/>
</dbReference>
<dbReference type="InterPro" id="IPR036721">
    <property type="entry name" value="RCK_C_sf"/>
</dbReference>
<dbReference type="PANTHER" id="PTHR43652">
    <property type="entry name" value="BASIC AMINO ACID ANTIPORTER YFCC-RELATED"/>
    <property type="match status" value="1"/>
</dbReference>
<dbReference type="PANTHER" id="PTHR43652:SF2">
    <property type="entry name" value="BASIC AMINO ACID ANTIPORTER YFCC-RELATED"/>
    <property type="match status" value="1"/>
</dbReference>
<dbReference type="Pfam" id="PF03600">
    <property type="entry name" value="CitMHS"/>
    <property type="match status" value="1"/>
</dbReference>
<dbReference type="Pfam" id="PF02080">
    <property type="entry name" value="TrkA_C"/>
    <property type="match status" value="2"/>
</dbReference>
<dbReference type="SUPFAM" id="SSF116726">
    <property type="entry name" value="TrkA C-terminal domain-like"/>
    <property type="match status" value="2"/>
</dbReference>
<dbReference type="PROSITE" id="PS01271">
    <property type="entry name" value="NA_SULFATE"/>
    <property type="match status" value="1"/>
</dbReference>
<dbReference type="PROSITE" id="PS51202">
    <property type="entry name" value="RCK_C"/>
    <property type="match status" value="2"/>
</dbReference>
<comment type="function">
    <text>Not known; mutations in SAC1 produces cells that cannot synthesize arylsulfatase and cannot take up sulfate as rapidly as wild-type cells. SAC1 is necessary for cells to survive sulfur deprivation.</text>
</comment>
<comment type="subcellular location">
    <subcellularLocation>
        <location evidence="3">Membrane</location>
        <topology evidence="3">Multi-pass membrane protein</topology>
    </subcellularLocation>
</comment>
<comment type="similarity">
    <text evidence="3">Belongs to the CitM (TC 2.A.11) transporter family.</text>
</comment>
<evidence type="ECO:0000255" key="1"/>
<evidence type="ECO:0000255" key="2">
    <source>
        <dbReference type="PROSITE-ProRule" id="PRU00544"/>
    </source>
</evidence>
<evidence type="ECO:0000305" key="3"/>
<keyword id="KW-0472">Membrane</keyword>
<keyword id="KW-0677">Repeat</keyword>
<keyword id="KW-0812">Transmembrane</keyword>
<keyword id="KW-1133">Transmembrane helix</keyword>
<keyword id="KW-0813">Transport</keyword>